<reference evidence="6" key="1">
    <citation type="journal article" date="2002" name="Cell">
        <title>Reptin and pontin antagonistically regulate heart growth in zebrafish embryos.</title>
        <authorList>
            <person name="Rottbauer W."/>
            <person name="Saurin A.J."/>
            <person name="Lickert H."/>
            <person name="Shen X."/>
            <person name="Burns C.G."/>
            <person name="Wo Z.G."/>
            <person name="Kemler R."/>
            <person name="Kingston R."/>
            <person name="Wu C."/>
            <person name="Fishman M."/>
        </authorList>
    </citation>
    <scope>NUCLEOTIDE SEQUENCE [MRNA]</scope>
</reference>
<dbReference type="EC" id="3.6.4.12" evidence="3"/>
<dbReference type="EMBL" id="AY092764">
    <property type="protein sequence ID" value="AAM18788.1"/>
    <property type="molecule type" value="mRNA"/>
</dbReference>
<dbReference type="SMR" id="Q8AWW7"/>
<dbReference type="FunCoup" id="Q8AWW7">
    <property type="interactions" value="2846"/>
</dbReference>
<dbReference type="STRING" id="7955.ENSDARP00000012488"/>
<dbReference type="PaxDb" id="7955-ENSDARP00000012488"/>
<dbReference type="AGR" id="ZFIN:ZDB-GENE-030109-2"/>
<dbReference type="ZFIN" id="ZDB-GENE-030109-2">
    <property type="gene designation" value="ruvbl1"/>
</dbReference>
<dbReference type="eggNOG" id="KOG1942">
    <property type="taxonomic scope" value="Eukaryota"/>
</dbReference>
<dbReference type="InParanoid" id="Q8AWW7"/>
<dbReference type="PhylomeDB" id="Q8AWW7"/>
<dbReference type="Reactome" id="R-DRE-201722">
    <property type="pathway name" value="Formation of the beta-catenin:TCF transactivating complex"/>
</dbReference>
<dbReference type="Reactome" id="R-DRE-5689880">
    <property type="pathway name" value="Ub-specific processing proteases"/>
</dbReference>
<dbReference type="PRO" id="PR:Q8AWW7"/>
<dbReference type="Proteomes" id="UP000000437">
    <property type="component" value="Unplaced"/>
</dbReference>
<dbReference type="GO" id="GO:0005829">
    <property type="term" value="C:cytosol"/>
    <property type="evidence" value="ECO:0000314"/>
    <property type="project" value="ZFIN"/>
</dbReference>
<dbReference type="GO" id="GO:0120293">
    <property type="term" value="C:dynein axonemal particle"/>
    <property type="evidence" value="ECO:0000250"/>
    <property type="project" value="UniProtKB"/>
</dbReference>
<dbReference type="GO" id="GO:0005576">
    <property type="term" value="C:extracellular region"/>
    <property type="evidence" value="ECO:0007669"/>
    <property type="project" value="GOC"/>
</dbReference>
<dbReference type="GO" id="GO:0031011">
    <property type="term" value="C:Ino80 complex"/>
    <property type="evidence" value="ECO:0000318"/>
    <property type="project" value="GO_Central"/>
</dbReference>
<dbReference type="GO" id="GO:0071339">
    <property type="term" value="C:MLL1 complex"/>
    <property type="evidence" value="ECO:0000250"/>
    <property type="project" value="UniProtKB"/>
</dbReference>
<dbReference type="GO" id="GO:0035267">
    <property type="term" value="C:NuA4 histone acetyltransferase complex"/>
    <property type="evidence" value="ECO:0000318"/>
    <property type="project" value="GO_Central"/>
</dbReference>
<dbReference type="GO" id="GO:0097255">
    <property type="term" value="C:R2TP complex"/>
    <property type="evidence" value="ECO:0000318"/>
    <property type="project" value="GO_Central"/>
</dbReference>
<dbReference type="GO" id="GO:0000812">
    <property type="term" value="C:Swr1 complex"/>
    <property type="evidence" value="ECO:0000250"/>
    <property type="project" value="UniProtKB"/>
</dbReference>
<dbReference type="GO" id="GO:0005524">
    <property type="term" value="F:ATP binding"/>
    <property type="evidence" value="ECO:0007669"/>
    <property type="project" value="UniProtKB-KW"/>
</dbReference>
<dbReference type="GO" id="GO:0016887">
    <property type="term" value="F:ATP hydrolysis activity"/>
    <property type="evidence" value="ECO:0007669"/>
    <property type="project" value="InterPro"/>
</dbReference>
<dbReference type="GO" id="GO:0003678">
    <property type="term" value="F:DNA helicase activity"/>
    <property type="evidence" value="ECO:0000318"/>
    <property type="project" value="GO_Central"/>
</dbReference>
<dbReference type="GO" id="GO:0070286">
    <property type="term" value="P:axonemal dynein complex assembly"/>
    <property type="evidence" value="ECO:0000315"/>
    <property type="project" value="ZFIN"/>
</dbReference>
<dbReference type="GO" id="GO:0000492">
    <property type="term" value="P:box C/D snoRNP assembly"/>
    <property type="evidence" value="ECO:0000318"/>
    <property type="project" value="GO_Central"/>
</dbReference>
<dbReference type="GO" id="GO:0006338">
    <property type="term" value="P:chromatin remodeling"/>
    <property type="evidence" value="ECO:0000318"/>
    <property type="project" value="GO_Central"/>
</dbReference>
<dbReference type="GO" id="GO:0006310">
    <property type="term" value="P:DNA recombination"/>
    <property type="evidence" value="ECO:0007669"/>
    <property type="project" value="UniProtKB-KW"/>
</dbReference>
<dbReference type="GO" id="GO:0006281">
    <property type="term" value="P:DNA repair"/>
    <property type="evidence" value="ECO:0007669"/>
    <property type="project" value="UniProtKB-KW"/>
</dbReference>
<dbReference type="GO" id="GO:0003351">
    <property type="term" value="P:epithelial cilium movement involved in extracellular fluid movement"/>
    <property type="evidence" value="ECO:0000315"/>
    <property type="project" value="ZFIN"/>
</dbReference>
<dbReference type="GO" id="GO:0007507">
    <property type="term" value="P:heart development"/>
    <property type="evidence" value="ECO:0000315"/>
    <property type="project" value="ZFIN"/>
</dbReference>
<dbReference type="GO" id="GO:0045893">
    <property type="term" value="P:positive regulation of DNA-templated transcription"/>
    <property type="evidence" value="ECO:0000303"/>
    <property type="project" value="UniProtKB"/>
</dbReference>
<dbReference type="GO" id="GO:0060420">
    <property type="term" value="P:regulation of heart growth"/>
    <property type="evidence" value="ECO:0000315"/>
    <property type="project" value="ZFIN"/>
</dbReference>
<dbReference type="GO" id="GO:0006357">
    <property type="term" value="P:regulation of transcription by RNA polymerase II"/>
    <property type="evidence" value="ECO:0000318"/>
    <property type="project" value="GO_Central"/>
</dbReference>
<dbReference type="FunFam" id="1.10.8.60:FF:000010">
    <property type="entry name" value="RuvB-like helicase"/>
    <property type="match status" value="1"/>
</dbReference>
<dbReference type="FunFam" id="2.40.50.360:FF:000001">
    <property type="entry name" value="RuvB-like helicase"/>
    <property type="match status" value="1"/>
</dbReference>
<dbReference type="Gene3D" id="1.10.8.60">
    <property type="match status" value="1"/>
</dbReference>
<dbReference type="Gene3D" id="3.40.50.300">
    <property type="entry name" value="P-loop containing nucleotide triphosphate hydrolases"/>
    <property type="match status" value="1"/>
</dbReference>
<dbReference type="Gene3D" id="2.40.50.360">
    <property type="entry name" value="RuvB-like helicase, domain II"/>
    <property type="match status" value="1"/>
</dbReference>
<dbReference type="InterPro" id="IPR003593">
    <property type="entry name" value="AAA+_ATPase"/>
</dbReference>
<dbReference type="InterPro" id="IPR027417">
    <property type="entry name" value="P-loop_NTPase"/>
</dbReference>
<dbReference type="InterPro" id="IPR027238">
    <property type="entry name" value="RuvB-like"/>
</dbReference>
<dbReference type="InterPro" id="IPR041048">
    <property type="entry name" value="RuvB-like_C"/>
</dbReference>
<dbReference type="InterPro" id="IPR042487">
    <property type="entry name" value="RuvBL1/2_DNA/RNA_bd_dom"/>
</dbReference>
<dbReference type="InterPro" id="IPR010339">
    <property type="entry name" value="TIP49_P-loop"/>
</dbReference>
<dbReference type="PANTHER" id="PTHR11093">
    <property type="entry name" value="RUVB-RELATED REPTIN AND PONTIN"/>
    <property type="match status" value="1"/>
</dbReference>
<dbReference type="Pfam" id="PF06068">
    <property type="entry name" value="TIP49"/>
    <property type="match status" value="1"/>
</dbReference>
<dbReference type="Pfam" id="PF17856">
    <property type="entry name" value="TIP49_C"/>
    <property type="match status" value="1"/>
</dbReference>
<dbReference type="SMART" id="SM00382">
    <property type="entry name" value="AAA"/>
    <property type="match status" value="1"/>
</dbReference>
<dbReference type="SUPFAM" id="SSF52540">
    <property type="entry name" value="P-loop containing nucleoside triphosphate hydrolases"/>
    <property type="match status" value="1"/>
</dbReference>
<accession>Q8AWW7</accession>
<comment type="function">
    <text evidence="3 5">Has single-stranded DNA-stimulated ATPase and ATP-dependent DNA helicase (3' to 5') activity suggesting a role in nuclear processes such as recombination and transcription (By similarity). Proposed core component of the chromatin remodeling Ino80 complex which exhibits DNA- and nucleosome-activated ATPase activity and catalyzes ATP-dependent nucleosome sliding (By similarity). May act as a negative regulator of embryonic heart growth (PubMed:12464178).</text>
</comment>
<comment type="catalytic activity">
    <reaction evidence="3">
        <text>ATP + H2O = ADP + phosphate + H(+)</text>
        <dbReference type="Rhea" id="RHEA:13065"/>
        <dbReference type="ChEBI" id="CHEBI:15377"/>
        <dbReference type="ChEBI" id="CHEBI:15378"/>
        <dbReference type="ChEBI" id="CHEBI:30616"/>
        <dbReference type="ChEBI" id="CHEBI:43474"/>
        <dbReference type="ChEBI" id="CHEBI:456216"/>
        <dbReference type="EC" id="3.6.4.12"/>
    </reaction>
    <physiologicalReaction direction="left-to-right" evidence="3">
        <dbReference type="Rhea" id="RHEA:13066"/>
    </physiologicalReaction>
</comment>
<comment type="subunit">
    <text evidence="3">Forms homohexameric rings (By similarity). Can form a dodecamer with ruvbl2 made of two stacked hexameric rings (By similarity). Is a component of the RNA polymerase II holoenzyme complex (By similarity). Component of the chromatin-remodeling Ino80 complex (By similarity). Component of some MLL1/MLL complex (By similarity).</text>
</comment>
<comment type="subcellular location">
    <subcellularLocation>
        <location evidence="1">Nucleus</location>
    </subcellularLocation>
    <subcellularLocation>
        <location evidence="2">Dynein axonemal particle</location>
    </subcellularLocation>
</comment>
<comment type="similarity">
    <text evidence="6">Belongs to the RuvB family.</text>
</comment>
<keyword id="KW-0067">ATP-binding</keyword>
<keyword id="KW-0963">Cytoplasm</keyword>
<keyword id="KW-0227">DNA damage</keyword>
<keyword id="KW-0233">DNA recombination</keyword>
<keyword id="KW-0234">DNA repair</keyword>
<keyword id="KW-0347">Helicase</keyword>
<keyword id="KW-0378">Hydrolase</keyword>
<keyword id="KW-0547">Nucleotide-binding</keyword>
<keyword id="KW-0539">Nucleus</keyword>
<keyword id="KW-1185">Reference proteome</keyword>
<keyword id="KW-0804">Transcription</keyword>
<keyword id="KW-0805">Transcription regulation</keyword>
<protein>
    <recommendedName>
        <fullName>RuvB-like 1</fullName>
        <ecNumber evidence="3">3.6.4.12</ecNumber>
    </recommendedName>
    <alternativeName>
        <fullName>Pontin</fullName>
    </alternativeName>
    <alternativeName>
        <fullName>zPontin</fullName>
    </alternativeName>
</protein>
<evidence type="ECO:0000250" key="1"/>
<evidence type="ECO:0000250" key="2">
    <source>
        <dbReference type="UniProtKB" id="Q9DE26"/>
    </source>
</evidence>
<evidence type="ECO:0000250" key="3">
    <source>
        <dbReference type="UniProtKB" id="Q9Y265"/>
    </source>
</evidence>
<evidence type="ECO:0000256" key="4">
    <source>
        <dbReference type="SAM" id="MobiDB-lite"/>
    </source>
</evidence>
<evidence type="ECO:0000269" key="5">
    <source>
    </source>
</evidence>
<evidence type="ECO:0000305" key="6"/>
<evidence type="ECO:0000312" key="7">
    <source>
        <dbReference type="EMBL" id="AAM18788.1"/>
    </source>
</evidence>
<name>RUVB1_DANRE</name>
<gene>
    <name type="primary">ruvbl1</name>
</gene>
<proteinExistence type="evidence at transcript level"/>
<sequence>MKIEEVKSTTKTQRIASHSHVKGLGLDEAGNAKQSASGLVGQESAREACGIITELIRSKKMAGRAILLAGPPGTGKTALALAMAQELGNKVPFCPMVGSEVYSSEIKKTEVLMENFRRAIGLRIKETKEVYEGEVTELTPCETENPMGGYGKTISHVIIGLKTAKGTKQLKLDPSIYESLQKERVEVGDVIYIEANSGAVKRQGRCDTFATEFDLEAEEYVPLPKGDVHEKKEIIQDVTLHDLDVANARPQGGQDILSMMGQLMKPKKTEITDKLRGEINKVVNKYIDQGVAELVPGVLFIDEVHMLDIECFTYLHRALESSIAPIVVFASNRGNCLIRGTEDISSPHGIPLDLLDRVMIIRTMLYTPQEMKQIIKIRAQTEGLNISEEALSHLGEIGTKTTLRYAVQLLTPASLLARVQGREVVEKEHVEEINELFYDAKSSAKILQDQHTKFMK</sequence>
<feature type="chain" id="PRO_0000165642" description="RuvB-like 1">
    <location>
        <begin position="1"/>
        <end position="456"/>
    </location>
</feature>
<feature type="region of interest" description="Disordered" evidence="4">
    <location>
        <begin position="1"/>
        <end position="20"/>
    </location>
</feature>
<feature type="binding site" evidence="1">
    <location>
        <begin position="70"/>
        <end position="77"/>
    </location>
    <ligand>
        <name>ATP</name>
        <dbReference type="ChEBI" id="CHEBI:30616"/>
    </ligand>
</feature>
<organism evidence="7">
    <name type="scientific">Danio rerio</name>
    <name type="common">Zebrafish</name>
    <name type="synonym">Brachydanio rerio</name>
    <dbReference type="NCBI Taxonomy" id="7955"/>
    <lineage>
        <taxon>Eukaryota</taxon>
        <taxon>Metazoa</taxon>
        <taxon>Chordata</taxon>
        <taxon>Craniata</taxon>
        <taxon>Vertebrata</taxon>
        <taxon>Euteleostomi</taxon>
        <taxon>Actinopterygii</taxon>
        <taxon>Neopterygii</taxon>
        <taxon>Teleostei</taxon>
        <taxon>Ostariophysi</taxon>
        <taxon>Cypriniformes</taxon>
        <taxon>Danionidae</taxon>
        <taxon>Danioninae</taxon>
        <taxon>Danio</taxon>
    </lineage>
</organism>